<gene>
    <name evidence="1" type="primary">mnmE</name>
    <name evidence="1" type="synonym">trmE</name>
    <name type="ordered locus">SP_1016</name>
</gene>
<comment type="function">
    <text evidence="1">Exhibits a very high intrinsic GTPase hydrolysis rate. Involved in the addition of a carboxymethylaminomethyl (cmnm) group at the wobble position (U34) of certain tRNAs, forming tRNA-cmnm(5)s(2)U34.</text>
</comment>
<comment type="cofactor">
    <cofactor evidence="1">
        <name>K(+)</name>
        <dbReference type="ChEBI" id="CHEBI:29103"/>
    </cofactor>
    <text evidence="1">Binds 1 potassium ion per subunit.</text>
</comment>
<comment type="subunit">
    <text evidence="1">Homodimer. Heterotetramer of two MnmE and two MnmG subunits.</text>
</comment>
<comment type="subcellular location">
    <subcellularLocation>
        <location evidence="1">Cytoplasm</location>
    </subcellularLocation>
</comment>
<comment type="similarity">
    <text evidence="1">Belongs to the TRAFAC class TrmE-Era-EngA-EngB-Septin-like GTPase superfamily. TrmE GTPase family.</text>
</comment>
<protein>
    <recommendedName>
        <fullName evidence="1">tRNA modification GTPase MnmE</fullName>
        <ecNumber evidence="1">3.6.-.-</ecNumber>
    </recommendedName>
</protein>
<name>MNME_STRPN</name>
<dbReference type="EC" id="3.6.-.-" evidence="1"/>
<dbReference type="EMBL" id="AE005672">
    <property type="protein sequence ID" value="AAK75131.1"/>
    <property type="molecule type" value="Genomic_DNA"/>
</dbReference>
<dbReference type="PIR" id="B95117">
    <property type="entry name" value="B95117"/>
</dbReference>
<dbReference type="RefSeq" id="WP_000632722.1">
    <property type="nucleotide sequence ID" value="NZ_CP155539.1"/>
</dbReference>
<dbReference type="SMR" id="Q97R24"/>
<dbReference type="PaxDb" id="170187-SP_1016"/>
<dbReference type="EnsemblBacteria" id="AAK75131">
    <property type="protein sequence ID" value="AAK75131"/>
    <property type="gene ID" value="SP_1016"/>
</dbReference>
<dbReference type="KEGG" id="spn:SP_1016"/>
<dbReference type="eggNOG" id="COG0486">
    <property type="taxonomic scope" value="Bacteria"/>
</dbReference>
<dbReference type="PhylomeDB" id="Q97R24"/>
<dbReference type="BioCyc" id="SPNE170187:G1FZB-1046-MONOMER"/>
<dbReference type="Proteomes" id="UP000000585">
    <property type="component" value="Chromosome"/>
</dbReference>
<dbReference type="GO" id="GO:0005829">
    <property type="term" value="C:cytosol"/>
    <property type="evidence" value="ECO:0007669"/>
    <property type="project" value="TreeGrafter"/>
</dbReference>
<dbReference type="GO" id="GO:0005525">
    <property type="term" value="F:GTP binding"/>
    <property type="evidence" value="ECO:0007669"/>
    <property type="project" value="UniProtKB-UniRule"/>
</dbReference>
<dbReference type="GO" id="GO:0003924">
    <property type="term" value="F:GTPase activity"/>
    <property type="evidence" value="ECO:0007669"/>
    <property type="project" value="UniProtKB-UniRule"/>
</dbReference>
<dbReference type="GO" id="GO:0046872">
    <property type="term" value="F:metal ion binding"/>
    <property type="evidence" value="ECO:0007669"/>
    <property type="project" value="UniProtKB-KW"/>
</dbReference>
<dbReference type="GO" id="GO:0030488">
    <property type="term" value="P:tRNA methylation"/>
    <property type="evidence" value="ECO:0007669"/>
    <property type="project" value="TreeGrafter"/>
</dbReference>
<dbReference type="GO" id="GO:0002098">
    <property type="term" value="P:tRNA wobble uridine modification"/>
    <property type="evidence" value="ECO:0007669"/>
    <property type="project" value="TreeGrafter"/>
</dbReference>
<dbReference type="CDD" id="cd04164">
    <property type="entry name" value="trmE"/>
    <property type="match status" value="1"/>
</dbReference>
<dbReference type="CDD" id="cd14858">
    <property type="entry name" value="TrmE_N"/>
    <property type="match status" value="1"/>
</dbReference>
<dbReference type="FunFam" id="3.30.1360.120:FF:000003">
    <property type="entry name" value="tRNA modification GTPase MnmE"/>
    <property type="match status" value="1"/>
</dbReference>
<dbReference type="FunFam" id="3.40.50.300:FF:000494">
    <property type="entry name" value="tRNA modification GTPase MnmE"/>
    <property type="match status" value="1"/>
</dbReference>
<dbReference type="Gene3D" id="3.40.50.300">
    <property type="entry name" value="P-loop containing nucleotide triphosphate hydrolases"/>
    <property type="match status" value="1"/>
</dbReference>
<dbReference type="Gene3D" id="3.30.1360.120">
    <property type="entry name" value="Probable tRNA modification gtpase trme, domain 1"/>
    <property type="match status" value="1"/>
</dbReference>
<dbReference type="Gene3D" id="1.20.120.430">
    <property type="entry name" value="tRNA modification GTPase MnmE domain 2"/>
    <property type="match status" value="1"/>
</dbReference>
<dbReference type="HAMAP" id="MF_00379">
    <property type="entry name" value="GTPase_MnmE"/>
    <property type="match status" value="1"/>
</dbReference>
<dbReference type="InterPro" id="IPR031168">
    <property type="entry name" value="G_TrmE"/>
</dbReference>
<dbReference type="InterPro" id="IPR006073">
    <property type="entry name" value="GTP-bd"/>
</dbReference>
<dbReference type="InterPro" id="IPR018948">
    <property type="entry name" value="GTP-bd_TrmE_N"/>
</dbReference>
<dbReference type="InterPro" id="IPR004520">
    <property type="entry name" value="GTPase_MnmE"/>
</dbReference>
<dbReference type="InterPro" id="IPR027368">
    <property type="entry name" value="MnmE_dom2"/>
</dbReference>
<dbReference type="InterPro" id="IPR025867">
    <property type="entry name" value="MnmE_helical"/>
</dbReference>
<dbReference type="InterPro" id="IPR027417">
    <property type="entry name" value="P-loop_NTPase"/>
</dbReference>
<dbReference type="InterPro" id="IPR005225">
    <property type="entry name" value="Small_GTP-bd"/>
</dbReference>
<dbReference type="InterPro" id="IPR027266">
    <property type="entry name" value="TrmE/GcvT_dom1"/>
</dbReference>
<dbReference type="NCBIfam" id="TIGR00450">
    <property type="entry name" value="mnmE_trmE_thdF"/>
    <property type="match status" value="1"/>
</dbReference>
<dbReference type="NCBIfam" id="NF003661">
    <property type="entry name" value="PRK05291.1-3"/>
    <property type="match status" value="1"/>
</dbReference>
<dbReference type="NCBIfam" id="TIGR00231">
    <property type="entry name" value="small_GTP"/>
    <property type="match status" value="1"/>
</dbReference>
<dbReference type="PANTHER" id="PTHR42714">
    <property type="entry name" value="TRNA MODIFICATION GTPASE GTPBP3"/>
    <property type="match status" value="1"/>
</dbReference>
<dbReference type="PANTHER" id="PTHR42714:SF2">
    <property type="entry name" value="TRNA MODIFICATION GTPASE GTPBP3, MITOCHONDRIAL"/>
    <property type="match status" value="1"/>
</dbReference>
<dbReference type="Pfam" id="PF01926">
    <property type="entry name" value="MMR_HSR1"/>
    <property type="match status" value="1"/>
</dbReference>
<dbReference type="Pfam" id="PF12631">
    <property type="entry name" value="MnmE_helical"/>
    <property type="match status" value="1"/>
</dbReference>
<dbReference type="Pfam" id="PF10396">
    <property type="entry name" value="TrmE_N"/>
    <property type="match status" value="1"/>
</dbReference>
<dbReference type="SUPFAM" id="SSF52540">
    <property type="entry name" value="P-loop containing nucleoside triphosphate hydrolases"/>
    <property type="match status" value="1"/>
</dbReference>
<dbReference type="SUPFAM" id="SSF116878">
    <property type="entry name" value="TrmE connector domain"/>
    <property type="match status" value="1"/>
</dbReference>
<dbReference type="PROSITE" id="PS51709">
    <property type="entry name" value="G_TRME"/>
    <property type="match status" value="1"/>
</dbReference>
<proteinExistence type="inferred from homology"/>
<evidence type="ECO:0000255" key="1">
    <source>
        <dbReference type="HAMAP-Rule" id="MF_00379"/>
    </source>
</evidence>
<feature type="chain" id="PRO_0000188929" description="tRNA modification GTPase MnmE">
    <location>
        <begin position="1"/>
        <end position="457"/>
    </location>
</feature>
<feature type="domain" description="TrmE-type G">
    <location>
        <begin position="223"/>
        <end position="377"/>
    </location>
</feature>
<feature type="binding site" evidence="1">
    <location>
        <position position="25"/>
    </location>
    <ligand>
        <name>(6S)-5-formyl-5,6,7,8-tetrahydrofolate</name>
        <dbReference type="ChEBI" id="CHEBI:57457"/>
    </ligand>
</feature>
<feature type="binding site" evidence="1">
    <location>
        <position position="87"/>
    </location>
    <ligand>
        <name>(6S)-5-formyl-5,6,7,8-tetrahydrofolate</name>
        <dbReference type="ChEBI" id="CHEBI:57457"/>
    </ligand>
</feature>
<feature type="binding site" evidence="1">
    <location>
        <position position="126"/>
    </location>
    <ligand>
        <name>(6S)-5-formyl-5,6,7,8-tetrahydrofolate</name>
        <dbReference type="ChEBI" id="CHEBI:57457"/>
    </ligand>
</feature>
<feature type="binding site" evidence="1">
    <location>
        <begin position="233"/>
        <end position="238"/>
    </location>
    <ligand>
        <name>GTP</name>
        <dbReference type="ChEBI" id="CHEBI:37565"/>
    </ligand>
</feature>
<feature type="binding site" evidence="1">
    <location>
        <position position="233"/>
    </location>
    <ligand>
        <name>K(+)</name>
        <dbReference type="ChEBI" id="CHEBI:29103"/>
    </ligand>
</feature>
<feature type="binding site" evidence="1">
    <location>
        <position position="237"/>
    </location>
    <ligand>
        <name>Mg(2+)</name>
        <dbReference type="ChEBI" id="CHEBI:18420"/>
    </ligand>
</feature>
<feature type="binding site" evidence="1">
    <location>
        <begin position="252"/>
        <end position="258"/>
    </location>
    <ligand>
        <name>GTP</name>
        <dbReference type="ChEBI" id="CHEBI:37565"/>
    </ligand>
</feature>
<feature type="binding site" evidence="1">
    <location>
        <position position="252"/>
    </location>
    <ligand>
        <name>K(+)</name>
        <dbReference type="ChEBI" id="CHEBI:29103"/>
    </ligand>
</feature>
<feature type="binding site" evidence="1">
    <location>
        <position position="254"/>
    </location>
    <ligand>
        <name>K(+)</name>
        <dbReference type="ChEBI" id="CHEBI:29103"/>
    </ligand>
</feature>
<feature type="binding site" evidence="1">
    <location>
        <position position="257"/>
    </location>
    <ligand>
        <name>K(+)</name>
        <dbReference type="ChEBI" id="CHEBI:29103"/>
    </ligand>
</feature>
<feature type="binding site" evidence="1">
    <location>
        <position position="258"/>
    </location>
    <ligand>
        <name>Mg(2+)</name>
        <dbReference type="ChEBI" id="CHEBI:18420"/>
    </ligand>
</feature>
<feature type="binding site" evidence="1">
    <location>
        <begin position="277"/>
        <end position="280"/>
    </location>
    <ligand>
        <name>GTP</name>
        <dbReference type="ChEBI" id="CHEBI:37565"/>
    </ligand>
</feature>
<feature type="binding site" evidence="1">
    <location>
        <position position="457"/>
    </location>
    <ligand>
        <name>(6S)-5-formyl-5,6,7,8-tetrahydrofolate</name>
        <dbReference type="ChEBI" id="CHEBI:57457"/>
    </ligand>
</feature>
<organism>
    <name type="scientific">Streptococcus pneumoniae serotype 4 (strain ATCC BAA-334 / TIGR4)</name>
    <dbReference type="NCBI Taxonomy" id="170187"/>
    <lineage>
        <taxon>Bacteria</taxon>
        <taxon>Bacillati</taxon>
        <taxon>Bacillota</taxon>
        <taxon>Bacilli</taxon>
        <taxon>Lactobacillales</taxon>
        <taxon>Streptococcaceae</taxon>
        <taxon>Streptococcus</taxon>
    </lineage>
</organism>
<reference key="1">
    <citation type="journal article" date="2001" name="Science">
        <title>Complete genome sequence of a virulent isolate of Streptococcus pneumoniae.</title>
        <authorList>
            <person name="Tettelin H."/>
            <person name="Nelson K.E."/>
            <person name="Paulsen I.T."/>
            <person name="Eisen J.A."/>
            <person name="Read T.D."/>
            <person name="Peterson S.N."/>
            <person name="Heidelberg J.F."/>
            <person name="DeBoy R.T."/>
            <person name="Haft D.H."/>
            <person name="Dodson R.J."/>
            <person name="Durkin A.S."/>
            <person name="Gwinn M.L."/>
            <person name="Kolonay J.F."/>
            <person name="Nelson W.C."/>
            <person name="Peterson J.D."/>
            <person name="Umayam L.A."/>
            <person name="White O."/>
            <person name="Salzberg S.L."/>
            <person name="Lewis M.R."/>
            <person name="Radune D."/>
            <person name="Holtzapple E.K."/>
            <person name="Khouri H.M."/>
            <person name="Wolf A.M."/>
            <person name="Utterback T.R."/>
            <person name="Hansen C.L."/>
            <person name="McDonald L.A."/>
            <person name="Feldblyum T.V."/>
            <person name="Angiuoli S.V."/>
            <person name="Dickinson T."/>
            <person name="Hickey E.K."/>
            <person name="Holt I.E."/>
            <person name="Loftus B.J."/>
            <person name="Yang F."/>
            <person name="Smith H.O."/>
            <person name="Venter J.C."/>
            <person name="Dougherty B.A."/>
            <person name="Morrison D.A."/>
            <person name="Hollingshead S.K."/>
            <person name="Fraser C.M."/>
        </authorList>
    </citation>
    <scope>NUCLEOTIDE SEQUENCE [LARGE SCALE GENOMIC DNA]</scope>
    <source>
        <strain>ATCC BAA-334 / TIGR4</strain>
    </source>
</reference>
<sequence length="457" mass="50519">MITREFDTIAAISTPLGEGAIGIVRLSGTDSFAIAQKIFKGKDLNKVASHTLNYGHIIDPLTGKVMDEVMVGAMKSPKTFTREDIIEINTHGGIAVTNEILQLAIREGARLAEPGEFTKRAFLNGRVDLTQAEAVMDIIRAKTDKAMNIAVKQLDGSLSDLINNTRQEILNTLAQVEVNIDYPEYDDVEEATTAVVREKTMEFEQLLTKLLRTARRGKILREGISTAIIGRPNVGKSSLLNNLLREDKAIVTDIAGTTRDVIEEYVNINGVPLKLIDTAGIRETDDIVEQIGVERSKKALKEADLVLLVLNASEPLTAQDRQLLEISQETNRIILLNKTDLPETIETSELPEDVIRISVLKNQNIDKIEERINNLFFENAGLVEQDATYLSNARHISLIEKAVESLQAVNQGLELGMPVDLLQVDLTRTWEILGEITGDAAPDELITQLFSQFCLGK</sequence>
<accession>Q97R24</accession>
<keyword id="KW-0963">Cytoplasm</keyword>
<keyword id="KW-0342">GTP-binding</keyword>
<keyword id="KW-0378">Hydrolase</keyword>
<keyword id="KW-0460">Magnesium</keyword>
<keyword id="KW-0479">Metal-binding</keyword>
<keyword id="KW-0547">Nucleotide-binding</keyword>
<keyword id="KW-0630">Potassium</keyword>
<keyword id="KW-1185">Reference proteome</keyword>
<keyword id="KW-0819">tRNA processing</keyword>